<accession>A7Z7H4</accession>
<name>RL35_BACVZ</name>
<proteinExistence type="inferred from homology"/>
<organism>
    <name type="scientific">Bacillus velezensis (strain DSM 23117 / BGSC 10A6 / LMG 26770 / FZB42)</name>
    <name type="common">Bacillus amyloliquefaciens subsp. plantarum</name>
    <dbReference type="NCBI Taxonomy" id="326423"/>
    <lineage>
        <taxon>Bacteria</taxon>
        <taxon>Bacillati</taxon>
        <taxon>Bacillota</taxon>
        <taxon>Bacilli</taxon>
        <taxon>Bacillales</taxon>
        <taxon>Bacillaceae</taxon>
        <taxon>Bacillus</taxon>
        <taxon>Bacillus amyloliquefaciens group</taxon>
    </lineage>
</organism>
<reference key="1">
    <citation type="journal article" date="2007" name="Nat. Biotechnol.">
        <title>Comparative analysis of the complete genome sequence of the plant growth-promoting bacterium Bacillus amyloliquefaciens FZB42.</title>
        <authorList>
            <person name="Chen X.H."/>
            <person name="Koumoutsi A."/>
            <person name="Scholz R."/>
            <person name="Eisenreich A."/>
            <person name="Schneider K."/>
            <person name="Heinemeyer I."/>
            <person name="Morgenstern B."/>
            <person name="Voss B."/>
            <person name="Hess W.R."/>
            <person name="Reva O."/>
            <person name="Junge H."/>
            <person name="Voigt B."/>
            <person name="Jungblut P.R."/>
            <person name="Vater J."/>
            <person name="Suessmuth R."/>
            <person name="Liesegang H."/>
            <person name="Strittmatter A."/>
            <person name="Gottschalk G."/>
            <person name="Borriss R."/>
        </authorList>
    </citation>
    <scope>NUCLEOTIDE SEQUENCE [LARGE SCALE GENOMIC DNA]</scope>
    <source>
        <strain>DSM 23117 / BGSC 10A6 / LMG 26770 / FZB42</strain>
    </source>
</reference>
<comment type="similarity">
    <text evidence="1">Belongs to the bacterial ribosomal protein bL35 family.</text>
</comment>
<protein>
    <recommendedName>
        <fullName evidence="1">Large ribosomal subunit protein bL35</fullName>
    </recommendedName>
    <alternativeName>
        <fullName evidence="3">50S ribosomal protein L35</fullName>
    </alternativeName>
</protein>
<dbReference type="EMBL" id="CP000560">
    <property type="protein sequence ID" value="ABS74950.1"/>
    <property type="molecule type" value="Genomic_DNA"/>
</dbReference>
<dbReference type="RefSeq" id="WP_003152493.1">
    <property type="nucleotide sequence ID" value="NC_009725.2"/>
</dbReference>
<dbReference type="SMR" id="A7Z7H4"/>
<dbReference type="GeneID" id="93081734"/>
<dbReference type="KEGG" id="bay:RBAM_025920"/>
<dbReference type="HOGENOM" id="CLU_169643_3_0_9"/>
<dbReference type="Proteomes" id="UP000001120">
    <property type="component" value="Chromosome"/>
</dbReference>
<dbReference type="GO" id="GO:0022625">
    <property type="term" value="C:cytosolic large ribosomal subunit"/>
    <property type="evidence" value="ECO:0007669"/>
    <property type="project" value="TreeGrafter"/>
</dbReference>
<dbReference type="GO" id="GO:0003735">
    <property type="term" value="F:structural constituent of ribosome"/>
    <property type="evidence" value="ECO:0007669"/>
    <property type="project" value="InterPro"/>
</dbReference>
<dbReference type="GO" id="GO:0006412">
    <property type="term" value="P:translation"/>
    <property type="evidence" value="ECO:0007669"/>
    <property type="project" value="UniProtKB-UniRule"/>
</dbReference>
<dbReference type="FunFam" id="4.10.410.60:FF:000001">
    <property type="entry name" value="50S ribosomal protein L35"/>
    <property type="match status" value="1"/>
</dbReference>
<dbReference type="Gene3D" id="4.10.410.60">
    <property type="match status" value="1"/>
</dbReference>
<dbReference type="HAMAP" id="MF_00514">
    <property type="entry name" value="Ribosomal_bL35"/>
    <property type="match status" value="1"/>
</dbReference>
<dbReference type="InterPro" id="IPR001706">
    <property type="entry name" value="Ribosomal_bL35"/>
</dbReference>
<dbReference type="InterPro" id="IPR021137">
    <property type="entry name" value="Ribosomal_bL35-like"/>
</dbReference>
<dbReference type="InterPro" id="IPR018265">
    <property type="entry name" value="Ribosomal_bL35_CS"/>
</dbReference>
<dbReference type="InterPro" id="IPR037229">
    <property type="entry name" value="Ribosomal_bL35_sf"/>
</dbReference>
<dbReference type="NCBIfam" id="TIGR00001">
    <property type="entry name" value="rpmI_bact"/>
    <property type="match status" value="1"/>
</dbReference>
<dbReference type="PANTHER" id="PTHR33343">
    <property type="entry name" value="54S RIBOSOMAL PROTEIN BL35M"/>
    <property type="match status" value="1"/>
</dbReference>
<dbReference type="PANTHER" id="PTHR33343:SF1">
    <property type="entry name" value="LARGE RIBOSOMAL SUBUNIT PROTEIN BL35M"/>
    <property type="match status" value="1"/>
</dbReference>
<dbReference type="Pfam" id="PF01632">
    <property type="entry name" value="Ribosomal_L35p"/>
    <property type="match status" value="1"/>
</dbReference>
<dbReference type="PRINTS" id="PR00064">
    <property type="entry name" value="RIBOSOMALL35"/>
</dbReference>
<dbReference type="SUPFAM" id="SSF143034">
    <property type="entry name" value="L35p-like"/>
    <property type="match status" value="1"/>
</dbReference>
<dbReference type="PROSITE" id="PS00936">
    <property type="entry name" value="RIBOSOMAL_L35"/>
    <property type="match status" value="1"/>
</dbReference>
<sequence>MPKMKTHRGSAKRFKKTGSGKLKRSHAYTSHLFANKSQKQKRKLRKGAIVSAGDFKRIKQQLANIK</sequence>
<feature type="chain" id="PRO_1000050657" description="Large ribosomal subunit protein bL35">
    <location>
        <begin position="1"/>
        <end position="66"/>
    </location>
</feature>
<feature type="region of interest" description="Disordered" evidence="2">
    <location>
        <begin position="1"/>
        <end position="45"/>
    </location>
</feature>
<feature type="compositionally biased region" description="Basic residues" evidence="2">
    <location>
        <begin position="1"/>
        <end position="26"/>
    </location>
</feature>
<gene>
    <name evidence="1" type="primary">rpmI</name>
    <name type="ordered locus">RBAM_025920</name>
</gene>
<keyword id="KW-0687">Ribonucleoprotein</keyword>
<keyword id="KW-0689">Ribosomal protein</keyword>
<evidence type="ECO:0000255" key="1">
    <source>
        <dbReference type="HAMAP-Rule" id="MF_00514"/>
    </source>
</evidence>
<evidence type="ECO:0000256" key="2">
    <source>
        <dbReference type="SAM" id="MobiDB-lite"/>
    </source>
</evidence>
<evidence type="ECO:0000305" key="3"/>